<keyword id="KW-0013">ADP-ribosylation</keyword>
<keyword id="KW-0067">ATP-binding</keyword>
<keyword id="KW-0090">Biological rhythms</keyword>
<keyword id="KW-0119">Carbohydrate metabolism</keyword>
<keyword id="KW-1003">Cell membrane</keyword>
<keyword id="KW-0963">Cytoplasm</keyword>
<keyword id="KW-0217">Developmental protein</keyword>
<keyword id="KW-0221">Differentiation</keyword>
<keyword id="KW-0321">Glycogen metabolism</keyword>
<keyword id="KW-0418">Kinase</keyword>
<keyword id="KW-0449">Lipoprotein</keyword>
<keyword id="KW-0472">Membrane</keyword>
<keyword id="KW-0524">Neurogenesis</keyword>
<keyword id="KW-0547">Nucleotide-binding</keyword>
<keyword id="KW-0539">Nucleus</keyword>
<keyword id="KW-0564">Palmitate</keyword>
<keyword id="KW-0597">Phosphoprotein</keyword>
<keyword id="KW-0723">Serine/threonine-protein kinase</keyword>
<keyword id="KW-0734">Signal transduction inhibitor</keyword>
<keyword id="KW-0808">Transferase</keyword>
<keyword id="KW-0879">Wnt signaling pathway</keyword>
<organism>
    <name type="scientific">Spermophilus citellus</name>
    <name type="common">European ground squirrel</name>
    <name type="synonym">Citellus citellus</name>
    <dbReference type="NCBI Taxonomy" id="9997"/>
    <lineage>
        <taxon>Eukaryota</taxon>
        <taxon>Metazoa</taxon>
        <taxon>Chordata</taxon>
        <taxon>Craniata</taxon>
        <taxon>Vertebrata</taxon>
        <taxon>Euteleostomi</taxon>
        <taxon>Mammalia</taxon>
        <taxon>Eutheria</taxon>
        <taxon>Euarchontoglires</taxon>
        <taxon>Glires</taxon>
        <taxon>Rodentia</taxon>
        <taxon>Sciuromorpha</taxon>
        <taxon>Sciuridae</taxon>
        <taxon>Xerinae</taxon>
        <taxon>Marmotini</taxon>
        <taxon>Spermophilus</taxon>
    </lineage>
</organism>
<sequence>MSGRPRTTSFAESCKPVQQPSAFGSMKVSRDKDGSKVTTVVATPGQGPDRPQEVSYTDTKVIGNGSFGVVYQAKLCDSGELVAIKKVLQDKRFKNRELQIMRKLDHCNIVRLRYFFYSSGEKKDVVYLNLVLDYVPETVYRVARHYSRAKQTLPVIYVKLYMYQLFRSLAYIHSFGICHRDIKPQNLLLDPDTAVLKLCDFGSAKQLVRGEPNVSYICSRYYRAPELIFGATDYTSSIDVWSAGCVLAELLLGQPIFPGDSGVDQLVEIIKVLGTPTREQIREMNPNYTEFKFPQIKAHPWTKVFRPRTPPEAIALCSRLLEYTPTARLTPLEACAHSFFDELRDPNVKLPNGRDTPALFNFTTQELSSNPPLATILIPPHARIQAAASTPTNATAASDANAGDRGQTNNAAFASASNST</sequence>
<dbReference type="EC" id="2.7.11.26" evidence="2"/>
<dbReference type="EC" id="2.7.11.1" evidence="2"/>
<dbReference type="EMBL" id="AY392021">
    <property type="protein sequence ID" value="AAS59774.1"/>
    <property type="molecule type" value="mRNA"/>
</dbReference>
<dbReference type="SMR" id="Q5YJC2"/>
<dbReference type="GO" id="GO:0030424">
    <property type="term" value="C:axon"/>
    <property type="evidence" value="ECO:0007669"/>
    <property type="project" value="TreeGrafter"/>
</dbReference>
<dbReference type="GO" id="GO:0030877">
    <property type="term" value="C:beta-catenin destruction complex"/>
    <property type="evidence" value="ECO:0007669"/>
    <property type="project" value="TreeGrafter"/>
</dbReference>
<dbReference type="GO" id="GO:0005737">
    <property type="term" value="C:cytoplasm"/>
    <property type="evidence" value="ECO:0000250"/>
    <property type="project" value="UniProtKB"/>
</dbReference>
<dbReference type="GO" id="GO:0005829">
    <property type="term" value="C:cytosol"/>
    <property type="evidence" value="ECO:0007669"/>
    <property type="project" value="TreeGrafter"/>
</dbReference>
<dbReference type="GO" id="GO:0098978">
    <property type="term" value="C:glutamatergic synapse"/>
    <property type="evidence" value="ECO:0007669"/>
    <property type="project" value="TreeGrafter"/>
</dbReference>
<dbReference type="GO" id="GO:0016020">
    <property type="term" value="C:membrane"/>
    <property type="evidence" value="ECO:0000250"/>
    <property type="project" value="UniProtKB"/>
</dbReference>
<dbReference type="GO" id="GO:0005739">
    <property type="term" value="C:mitochondrion"/>
    <property type="evidence" value="ECO:0007669"/>
    <property type="project" value="GOC"/>
</dbReference>
<dbReference type="GO" id="GO:0005634">
    <property type="term" value="C:nucleus"/>
    <property type="evidence" value="ECO:0000250"/>
    <property type="project" value="UniProtKB"/>
</dbReference>
<dbReference type="GO" id="GO:0005886">
    <property type="term" value="C:plasma membrane"/>
    <property type="evidence" value="ECO:0000250"/>
    <property type="project" value="UniProtKB"/>
</dbReference>
<dbReference type="GO" id="GO:0005524">
    <property type="term" value="F:ATP binding"/>
    <property type="evidence" value="ECO:0007669"/>
    <property type="project" value="UniProtKB-KW"/>
</dbReference>
<dbReference type="GO" id="GO:0008013">
    <property type="term" value="F:beta-catenin binding"/>
    <property type="evidence" value="ECO:0007669"/>
    <property type="project" value="TreeGrafter"/>
</dbReference>
<dbReference type="GO" id="GO:0016301">
    <property type="term" value="F:kinase activity"/>
    <property type="evidence" value="ECO:0000250"/>
    <property type="project" value="UniProtKB"/>
</dbReference>
<dbReference type="GO" id="GO:0004672">
    <property type="term" value="F:protein kinase activity"/>
    <property type="evidence" value="ECO:0000250"/>
    <property type="project" value="UniProtKB"/>
</dbReference>
<dbReference type="GO" id="GO:0106310">
    <property type="term" value="F:protein serine kinase activity"/>
    <property type="evidence" value="ECO:0007669"/>
    <property type="project" value="RHEA"/>
</dbReference>
<dbReference type="GO" id="GO:0004674">
    <property type="term" value="F:protein serine/threonine kinase activity"/>
    <property type="evidence" value="ECO:0000250"/>
    <property type="project" value="UniProtKB"/>
</dbReference>
<dbReference type="GO" id="GO:0050321">
    <property type="term" value="F:tau-protein kinase activity"/>
    <property type="evidence" value="ECO:0000250"/>
    <property type="project" value="UniProtKB"/>
</dbReference>
<dbReference type="GO" id="GO:0036016">
    <property type="term" value="P:cellular response to interleukin-3"/>
    <property type="evidence" value="ECO:0000250"/>
    <property type="project" value="UniProtKB"/>
</dbReference>
<dbReference type="GO" id="GO:0007623">
    <property type="term" value="P:circadian rhythm"/>
    <property type="evidence" value="ECO:0000250"/>
    <property type="project" value="UniProtKB"/>
</dbReference>
<dbReference type="GO" id="GO:0001837">
    <property type="term" value="P:epithelial to mesenchymal transition"/>
    <property type="evidence" value="ECO:0000250"/>
    <property type="project" value="UniProtKB"/>
</dbReference>
<dbReference type="GO" id="GO:0097192">
    <property type="term" value="P:extrinsic apoptotic signaling pathway in absence of ligand"/>
    <property type="evidence" value="ECO:0000250"/>
    <property type="project" value="UniProtKB"/>
</dbReference>
<dbReference type="GO" id="GO:0005977">
    <property type="term" value="P:glycogen metabolic process"/>
    <property type="evidence" value="ECO:0007669"/>
    <property type="project" value="UniProtKB-KW"/>
</dbReference>
<dbReference type="GO" id="GO:0008286">
    <property type="term" value="P:insulin receptor signaling pathway"/>
    <property type="evidence" value="ECO:0007669"/>
    <property type="project" value="TreeGrafter"/>
</dbReference>
<dbReference type="GO" id="GO:0070885">
    <property type="term" value="P:negative regulation of calcineurin-NFAT signaling cascade"/>
    <property type="evidence" value="ECO:0000250"/>
    <property type="project" value="UniProtKB"/>
</dbReference>
<dbReference type="GO" id="GO:0090090">
    <property type="term" value="P:negative regulation of canonical Wnt signaling pathway"/>
    <property type="evidence" value="ECO:0007669"/>
    <property type="project" value="TreeGrafter"/>
</dbReference>
<dbReference type="GO" id="GO:0010719">
    <property type="term" value="P:negative regulation of epithelial to mesenchymal transition"/>
    <property type="evidence" value="ECO:0000250"/>
    <property type="project" value="UniProtKB"/>
</dbReference>
<dbReference type="GO" id="GO:1902042">
    <property type="term" value="P:negative regulation of extrinsic apoptotic signaling pathway via death domain receptors"/>
    <property type="evidence" value="ECO:0000250"/>
    <property type="project" value="UniProtKB"/>
</dbReference>
<dbReference type="GO" id="GO:1903940">
    <property type="term" value="P:negative regulation of TORC2 signaling"/>
    <property type="evidence" value="ECO:0000250"/>
    <property type="project" value="UniProtKB"/>
</dbReference>
<dbReference type="GO" id="GO:0007399">
    <property type="term" value="P:nervous system development"/>
    <property type="evidence" value="ECO:0007669"/>
    <property type="project" value="UniProtKB-KW"/>
</dbReference>
<dbReference type="GO" id="GO:0018105">
    <property type="term" value="P:peptidyl-serine phosphorylation"/>
    <property type="evidence" value="ECO:0000250"/>
    <property type="project" value="UniProtKB"/>
</dbReference>
<dbReference type="GO" id="GO:0010508">
    <property type="term" value="P:positive regulation of autophagy"/>
    <property type="evidence" value="ECO:0000250"/>
    <property type="project" value="UniProtKB"/>
</dbReference>
<dbReference type="GO" id="GO:0045724">
    <property type="term" value="P:positive regulation of cilium assembly"/>
    <property type="evidence" value="ECO:0000250"/>
    <property type="project" value="UniProtKB"/>
</dbReference>
<dbReference type="GO" id="GO:1901030">
    <property type="term" value="P:positive regulation of mitochondrial outer membrane permeabilization involved in apoptotic signaling pathway"/>
    <property type="evidence" value="ECO:0000250"/>
    <property type="project" value="UniProtKB"/>
</dbReference>
<dbReference type="GO" id="GO:0032436">
    <property type="term" value="P:positive regulation of proteasomal ubiquitin-dependent protein catabolic process"/>
    <property type="evidence" value="ECO:0007669"/>
    <property type="project" value="TreeGrafter"/>
</dbReference>
<dbReference type="GO" id="GO:0032092">
    <property type="term" value="P:positive regulation of protein binding"/>
    <property type="evidence" value="ECO:0000250"/>
    <property type="project" value="UniProtKB"/>
</dbReference>
<dbReference type="GO" id="GO:1903566">
    <property type="term" value="P:positive regulation of protein localization to cilium"/>
    <property type="evidence" value="ECO:0000250"/>
    <property type="project" value="UniProtKB"/>
</dbReference>
<dbReference type="GO" id="GO:0006468">
    <property type="term" value="P:protein phosphorylation"/>
    <property type="evidence" value="ECO:0000250"/>
    <property type="project" value="UniProtKB"/>
</dbReference>
<dbReference type="GO" id="GO:0070507">
    <property type="term" value="P:regulation of microtubule cytoskeleton organization"/>
    <property type="evidence" value="ECO:0007669"/>
    <property type="project" value="TreeGrafter"/>
</dbReference>
<dbReference type="GO" id="GO:0032886">
    <property type="term" value="P:regulation of microtubule-based process"/>
    <property type="evidence" value="ECO:0000250"/>
    <property type="project" value="UniProtKB"/>
</dbReference>
<dbReference type="GO" id="GO:0010975">
    <property type="term" value="P:regulation of neuron projection development"/>
    <property type="evidence" value="ECO:0007669"/>
    <property type="project" value="TreeGrafter"/>
</dbReference>
<dbReference type="GO" id="GO:0016055">
    <property type="term" value="P:Wnt signaling pathway"/>
    <property type="evidence" value="ECO:0007669"/>
    <property type="project" value="UniProtKB-KW"/>
</dbReference>
<dbReference type="CDD" id="cd14137">
    <property type="entry name" value="STKc_GSK3"/>
    <property type="match status" value="1"/>
</dbReference>
<dbReference type="FunFam" id="1.10.510.10:FF:000055">
    <property type="entry name" value="Glycogen synthase kinase-3 beta"/>
    <property type="match status" value="1"/>
</dbReference>
<dbReference type="FunFam" id="3.30.200.20:FF:000009">
    <property type="entry name" value="Glycogen synthase kinase-3 beta"/>
    <property type="match status" value="1"/>
</dbReference>
<dbReference type="Gene3D" id="3.30.200.20">
    <property type="entry name" value="Phosphorylase Kinase, domain 1"/>
    <property type="match status" value="1"/>
</dbReference>
<dbReference type="Gene3D" id="1.10.510.10">
    <property type="entry name" value="Transferase(Phosphotransferase) domain 1"/>
    <property type="match status" value="1"/>
</dbReference>
<dbReference type="InterPro" id="IPR050591">
    <property type="entry name" value="GSK-3"/>
</dbReference>
<dbReference type="InterPro" id="IPR011009">
    <property type="entry name" value="Kinase-like_dom_sf"/>
</dbReference>
<dbReference type="InterPro" id="IPR000719">
    <property type="entry name" value="Prot_kinase_dom"/>
</dbReference>
<dbReference type="InterPro" id="IPR017441">
    <property type="entry name" value="Protein_kinase_ATP_BS"/>
</dbReference>
<dbReference type="InterPro" id="IPR008271">
    <property type="entry name" value="Ser/Thr_kinase_AS"/>
</dbReference>
<dbReference type="InterPro" id="IPR039192">
    <property type="entry name" value="STKc_GSK3"/>
</dbReference>
<dbReference type="PANTHER" id="PTHR24057">
    <property type="entry name" value="GLYCOGEN SYNTHASE KINASE-3 ALPHA"/>
    <property type="match status" value="1"/>
</dbReference>
<dbReference type="PANTHER" id="PTHR24057:SF8">
    <property type="entry name" value="GLYCOGEN SYNTHASE KINASE-3 BETA"/>
    <property type="match status" value="1"/>
</dbReference>
<dbReference type="Pfam" id="PF00069">
    <property type="entry name" value="Pkinase"/>
    <property type="match status" value="1"/>
</dbReference>
<dbReference type="SMART" id="SM00220">
    <property type="entry name" value="S_TKc"/>
    <property type="match status" value="1"/>
</dbReference>
<dbReference type="SUPFAM" id="SSF56112">
    <property type="entry name" value="Protein kinase-like (PK-like)"/>
    <property type="match status" value="1"/>
</dbReference>
<dbReference type="PROSITE" id="PS00107">
    <property type="entry name" value="PROTEIN_KINASE_ATP"/>
    <property type="match status" value="1"/>
</dbReference>
<dbReference type="PROSITE" id="PS50011">
    <property type="entry name" value="PROTEIN_KINASE_DOM"/>
    <property type="match status" value="1"/>
</dbReference>
<dbReference type="PROSITE" id="PS00108">
    <property type="entry name" value="PROTEIN_KINASE_ST"/>
    <property type="match status" value="1"/>
</dbReference>
<reference key="1">
    <citation type="submission" date="2003-09" db="EMBL/GenBank/DDBJ databases">
        <title>Molecular cloning of Spermophilus citellus glycogen synthase kinase 3 beta.</title>
        <authorList>
            <person name="Stieler J.T."/>
            <person name="Strijkstra A.M."/>
        </authorList>
    </citation>
    <scope>NUCLEOTIDE SEQUENCE [MRNA]</scope>
</reference>
<comment type="function">
    <text evidence="1 2 3">Constitutively active protein kinase that acts as a negative regulator in the hormonal control of glucose homeostasis, Wnt signaling and regulation of transcription factors and microtubules, by phosphorylating and inactivating glycogen synthase (GYS1 or GYS2), EIF2B, CTNNB1/beta-catenin, APC, AXIN1, DPYSL2/CRMP2, JUN, NFATC1/NFATC, MAPT/TAU and MACF1. Requires primed phosphorylation of the majority of its substrates. In skeletal muscle, contributes to insulin regulation of glycogen synthesis by phosphorylating and inhibiting GYS1 activity and hence glycogen synthesis. May also mediate the development of insulin resistance by regulating activation of transcription factors. Regulates protein synthesis by controlling the activity of initiation factor 2B (EIF2BE/EIF2B5) in the same manner as glycogen synthase. In Wnt signaling, GSK3B forms a multimeric complex with APC, AXIN1 and CTNNB1/beta-catenin and phosphorylates the N-terminus of CTNNB1 leading to its degradation mediated by ubiquitin/proteasomes. Phosphorylates JUN at sites proximal to its DNA-binding domain, thereby reducing its affinity for DNA. Phosphorylates NFATC1/NFATC on conserved serine residues promoting NFATC1/NFATC nuclear export, shutting off NFATC1/NFATC gene regulation, and thereby opposing the action of calcineurin. Phosphorylates MAPT/TAU on 'Thr-548', decreasing significantly MAPT/TAU ability to bind and stabilize microtubules. MAPT/TAU is the principal component of neurofibrillary tangles in Alzheimer disease. Plays an important role in ERBB2-dependent stabilization of microtubules at the cell cortex (By similarity). Phosphorylates MACF1, inhibiting its binding to microtubules which is critical for its role in bulge stem cell migration and skin wound repair. Probably regulates NF-kappa-B (NFKB1) at the transcriptional level and is required for the NF-kappa-B-mediated anti-apoptotic response to TNF-alpha (TNF/TNFA). Negatively regulates replication in pancreatic beta-cells, resulting in apoptosis, loss of beta-cells and diabetes. Through phosphorylation of the anti-apoptotic protein MCL1, may control cell apoptosis in response to growth factors deprivation (By similarity). Phosphorylates MUC1 in breast cancer cells, decreasing the interaction of MUC1 with CTNNB1/beta-catenin. Is necessary for the establishment of neuronal polarity and axon outgrowth (By similarity). Phosphorylates MARK2, leading to inhibition of its activity (By similarity). Phosphorylates SIK1 at 'Thr-182', leading to sustainment of its activity. Phosphorylates ZC3HAV1 which enhances its antiviral activity. Phosphorylates SNAI1, leading to its ubiquitination and proteasomal degradation. Phosphorylates SFPQ at 'Thr-687' upon T-cell activation. Phosphorylates NR1D1 st 'Ser-55' and 'Ser-59' and stabilizes it by protecting it from proteasomal degradation. Regulates the circadian clock via phosphorylation of the major clock components including BMAL1, CLOCK and PER2. Phosphorylates CLOCK AT 'Ser-427' and targets it for proteasomal degradation. Phosphorylates BMAL1 at 'Ser-17' and 'Ser-21' and primes it for ubiquitination and proteasomal degradation. Phosphorylates FBXL2 at 'Thr-404' and primes it for ubiquitination by the SCF(FBXO3) complex and proteasomal degradation. Phosphorylates OGT at 'Ser-3' or 'Ser-4' which positively regulates its activity. Phosphorylates MYCN in neuroblastoma cells which may promote its degradation (By similarity). Regulates the circadian rhythmicity of hippocampal long-term potentiation and BMAL1 and PER2 expression (By similarity). Acts as a regulator of autophagy by mediating phosphorylation of KAT5/TIP60 under starvation conditions, activating KAT5/TIP60 acetyltransferase activity and promoting acetylation of key autophagy regulators, such as ULK1 and RUBCNL/Pacer. Negatively regulates extrinsic apoptotic signaling pathway via death domain receptors. Promotes the formation of an anti-apoptotic complex, made of DDX3X, BRIC2 and GSK3B, at death receptors, including TNFRSF10B. The anti-apoptotic function is most effective with weak apoptotic signals and can be overcome by stronger stimulation. Phosphorylates E2F1, promoting the interaction between E2F1 and USP11, stabilizing E2F1 and promoting its activity (By similarity). Phosphorylates mTORC2 complex component RICTOR at 'Ser-1235' in response to endoplasmic stress, inhibiting mTORC2 (By similarity). Phosphorylates FXR1, promoting FXR1 ubiquitination by the SCF(FBXO4) complex and FXR1 degradation by the proteasome (By similarity). Phosphorylates interleukin-22 receptor subunit IL22RA1, preventing its proteasomal degradation (By similarity).</text>
</comment>
<comment type="catalytic activity">
    <reaction evidence="2">
        <text>L-seryl-[tau protein] + ATP = O-phospho-L-seryl-[tau protein] + ADP + H(+)</text>
        <dbReference type="Rhea" id="RHEA:12801"/>
        <dbReference type="Rhea" id="RHEA-COMP:13701"/>
        <dbReference type="Rhea" id="RHEA-COMP:13702"/>
        <dbReference type="ChEBI" id="CHEBI:15378"/>
        <dbReference type="ChEBI" id="CHEBI:29999"/>
        <dbReference type="ChEBI" id="CHEBI:30616"/>
        <dbReference type="ChEBI" id="CHEBI:83421"/>
        <dbReference type="ChEBI" id="CHEBI:456216"/>
        <dbReference type="EC" id="2.7.11.26"/>
    </reaction>
</comment>
<comment type="catalytic activity">
    <reaction evidence="2">
        <text>L-threonyl-[tau protein] + ATP = O-phospho-L-threonyl-[tau protein] + ADP + H(+)</text>
        <dbReference type="Rhea" id="RHEA:53904"/>
        <dbReference type="Rhea" id="RHEA-COMP:13703"/>
        <dbReference type="Rhea" id="RHEA-COMP:13704"/>
        <dbReference type="ChEBI" id="CHEBI:15378"/>
        <dbReference type="ChEBI" id="CHEBI:30013"/>
        <dbReference type="ChEBI" id="CHEBI:30616"/>
        <dbReference type="ChEBI" id="CHEBI:61977"/>
        <dbReference type="ChEBI" id="CHEBI:456216"/>
        <dbReference type="EC" id="2.7.11.26"/>
    </reaction>
</comment>
<comment type="catalytic activity">
    <reaction evidence="2">
        <text>L-seryl-[protein] + ATP = O-phospho-L-seryl-[protein] + ADP + H(+)</text>
        <dbReference type="Rhea" id="RHEA:17989"/>
        <dbReference type="Rhea" id="RHEA-COMP:9863"/>
        <dbReference type="Rhea" id="RHEA-COMP:11604"/>
        <dbReference type="ChEBI" id="CHEBI:15378"/>
        <dbReference type="ChEBI" id="CHEBI:29999"/>
        <dbReference type="ChEBI" id="CHEBI:30616"/>
        <dbReference type="ChEBI" id="CHEBI:83421"/>
        <dbReference type="ChEBI" id="CHEBI:456216"/>
        <dbReference type="EC" id="2.7.11.1"/>
    </reaction>
</comment>
<comment type="catalytic activity">
    <reaction evidence="2">
        <text>L-threonyl-[protein] + ATP = O-phospho-L-threonyl-[protein] + ADP + H(+)</text>
        <dbReference type="Rhea" id="RHEA:46608"/>
        <dbReference type="Rhea" id="RHEA-COMP:11060"/>
        <dbReference type="Rhea" id="RHEA-COMP:11605"/>
        <dbReference type="ChEBI" id="CHEBI:15378"/>
        <dbReference type="ChEBI" id="CHEBI:30013"/>
        <dbReference type="ChEBI" id="CHEBI:30616"/>
        <dbReference type="ChEBI" id="CHEBI:61977"/>
        <dbReference type="ChEBI" id="CHEBI:456216"/>
        <dbReference type="EC" id="2.7.11.1"/>
    </reaction>
</comment>
<comment type="activity regulation">
    <text evidence="2 3">Activated by phosphorylation at Tyr-216. In response to insulin, inhibited by phosphorylation at Ser-9 by PKB/AKT1; phosphorylation at this site causes a conformational change, preventing access of substrates to the active site (By similarity). Inhibited by IL22 treatment which also triggers phosphorylation at Ser-9, promoting inactivation (By similarity). Inhibited by lithium (By similarity).</text>
</comment>
<comment type="subunit">
    <text evidence="1 2 3">Monomer (By similarity). Interacts with DAB2IP (via C2 domain); the interaction stimulates GSK3B kinase activation (By similarity). Interacts (via C2 domain) with PPP2CA (By similarity). Interacts with ARRB2, AXIN1, CABYR, DISC1, MMP2, MUC1, NIN, PRUNE1 and ZBED3 (By similarity). Interacts with AXIN1; the interaction mediates hyperphosphorylation of CTNNB1 leading to its ubiquitination and destruction (By similarity). Interacts with and phosphorylates SNAI1 (By similarity). Interacts with DNM1L (via a C-terminal domain) (By similarity). Found in a complex composed of MACF1, APC, AXIN1, CTNNB1 and GSK3B (By similarity). Interacts with SGK3 (By similarity). Interacts with the CLOCK-BMAL1 heterodimer (By similarity). Interacts with the BMAL1 (By similarity). Interacts with CTNND2 (By similarity). The complex composed, at least, of APC, CTNNB1 and GSK3B interacts with JPT1; the interaction requires the inactive form of GSK3B (phosphorylated at 'Ser-9') (By similarity). Forms a complex composed of PRKAR2A or PRKAR2B, GSK3B and GSKIP through GSKIP interaction; facilitates PKA-induced phosphorylation and regulates GSK3B activity (By similarity). Interacts with GSKIP (By similarity). Interacts with GID8 (By similarity). Interacts with PIWIL2 (By similarity). Interacts with LMBR1L (By similarity). Interacts with DDX3X (By similarity). Interacts with BIRC2 (By similarity). Interacts with TNFRSF10B; TNFRSF10B stimulation inhibits GSK3B kinase activity (By similarity). Found in a complex with SLC39A6, SLC39A10 and with GSK3B that controls NCAM1 phosphorylation (By similarity). Interacts with PKP3 (via ARM repeats); the interaction may be involved in PKP3 protein degradation (By similarity).</text>
</comment>
<comment type="subcellular location">
    <subcellularLocation>
        <location evidence="2">Cytoplasm</location>
    </subcellularLocation>
    <subcellularLocation>
        <location evidence="2">Nucleus</location>
    </subcellularLocation>
    <subcellularLocation>
        <location evidence="2">Cell membrane</location>
    </subcellularLocation>
    <text evidence="2">The phosphorylated form shows localization to cytoplasm and cell membrane. The MEMO1-RHOA-DIAPH1 signaling pathway controls localization of the phosphorylated form to the cell membrane (By similarity).</text>
</comment>
<comment type="PTM">
    <text evidence="2 3">Phosphorylated by AKT1 and ILK1. Upon insulin-mediated signaling, the activated PKB/AKT1 and RPS6KA3 protein kinases phosphorylate and deactivate GSK3B, resulting in the dephosphorylation and activation of GYS1. Activated by phosphorylation at Tyr-216 (By similarity). Inactivated by phosphorylation at Ser-9 (By similarity).</text>
</comment>
<comment type="PTM">
    <text evidence="2">Mono-ADP-ribosylation by PARP10 negatively regulates kinase activity.</text>
</comment>
<comment type="PTM">
    <text evidence="2">Palmitoylated. Palmitoylation by ZDHHC4 prevents AKT1-mediated phosphorylation.</text>
</comment>
<comment type="similarity">
    <text evidence="7">Belongs to the protein kinase superfamily. CMGC Ser/Thr protein kinase family. GSK-3 subfamily.</text>
</comment>
<gene>
    <name evidence="2" type="primary">GSK3B</name>
</gene>
<proteinExistence type="evidence at transcript level"/>
<accession>Q5YJC2</accession>
<protein>
    <recommendedName>
        <fullName evidence="2">Glycogen synthase kinase-3 beta</fullName>
        <shortName>GSK-3 beta</shortName>
        <ecNumber evidence="2">2.7.11.26</ecNumber>
    </recommendedName>
    <alternativeName>
        <fullName>Serine/threonine-protein kinase GSK3B</fullName>
        <ecNumber evidence="2">2.7.11.1</ecNumber>
    </alternativeName>
</protein>
<evidence type="ECO:0000250" key="1">
    <source>
        <dbReference type="UniProtKB" id="P18266"/>
    </source>
</evidence>
<evidence type="ECO:0000250" key="2">
    <source>
        <dbReference type="UniProtKB" id="P49841"/>
    </source>
</evidence>
<evidence type="ECO:0000250" key="3">
    <source>
        <dbReference type="UniProtKB" id="Q9WV60"/>
    </source>
</evidence>
<evidence type="ECO:0000255" key="4">
    <source>
        <dbReference type="PROSITE-ProRule" id="PRU00159"/>
    </source>
</evidence>
<evidence type="ECO:0000255" key="5">
    <source>
        <dbReference type="PROSITE-ProRule" id="PRU10027"/>
    </source>
</evidence>
<evidence type="ECO:0000256" key="6">
    <source>
        <dbReference type="SAM" id="MobiDB-lite"/>
    </source>
</evidence>
<evidence type="ECO:0000305" key="7"/>
<name>GSK3B_SPECI</name>
<feature type="chain" id="PRO_0000250495" description="Glycogen synthase kinase-3 beta">
    <location>
        <begin position="1"/>
        <end position="420"/>
    </location>
</feature>
<feature type="domain" description="Protein kinase" evidence="4">
    <location>
        <begin position="56"/>
        <end position="340"/>
    </location>
</feature>
<feature type="region of interest" description="Disordered" evidence="6">
    <location>
        <begin position="1"/>
        <end position="35"/>
    </location>
</feature>
<feature type="region of interest" description="Disordered" evidence="6">
    <location>
        <begin position="387"/>
        <end position="420"/>
    </location>
</feature>
<feature type="compositionally biased region" description="Polar residues" evidence="6">
    <location>
        <begin position="1"/>
        <end position="22"/>
    </location>
</feature>
<feature type="compositionally biased region" description="Low complexity" evidence="6">
    <location>
        <begin position="387"/>
        <end position="401"/>
    </location>
</feature>
<feature type="compositionally biased region" description="Low complexity" evidence="6">
    <location>
        <begin position="409"/>
        <end position="420"/>
    </location>
</feature>
<feature type="active site" description="Proton acceptor" evidence="4 5">
    <location>
        <position position="181"/>
    </location>
</feature>
<feature type="binding site" evidence="4">
    <location>
        <begin position="62"/>
        <end position="70"/>
    </location>
    <ligand>
        <name>ATP</name>
        <dbReference type="ChEBI" id="CHEBI:30616"/>
    </ligand>
</feature>
<feature type="binding site" evidence="4">
    <location>
        <position position="85"/>
    </location>
    <ligand>
        <name>ATP</name>
        <dbReference type="ChEBI" id="CHEBI:30616"/>
    </ligand>
</feature>
<feature type="modified residue" description="Phosphoserine; by PKB/AKT1, RPS6KA3 and SGK3" evidence="2">
    <location>
        <position position="9"/>
    </location>
</feature>
<feature type="modified residue" description="Phosphotyrosine" evidence="2">
    <location>
        <position position="216"/>
    </location>
</feature>
<feature type="modified residue" description="Phosphoserine" evidence="3">
    <location>
        <position position="389"/>
    </location>
</feature>
<feature type="modified residue" description="Phosphothreonine" evidence="2">
    <location>
        <position position="390"/>
    </location>
</feature>
<feature type="lipid moiety-binding region" description="S-palmitoyl cysteine" evidence="2">
    <location>
        <position position="14"/>
    </location>
</feature>